<proteinExistence type="inferred from homology"/>
<feature type="chain" id="PRO_1000124031" description="4-hydroxy-tetrahydrodipicolinate synthase">
    <location>
        <begin position="1"/>
        <end position="292"/>
    </location>
</feature>
<feature type="active site" description="Proton donor/acceptor" evidence="1">
    <location>
        <position position="133"/>
    </location>
</feature>
<feature type="active site" description="Schiff-base intermediate with substrate" evidence="1">
    <location>
        <position position="161"/>
    </location>
</feature>
<feature type="binding site" evidence="1">
    <location>
        <position position="45"/>
    </location>
    <ligand>
        <name>pyruvate</name>
        <dbReference type="ChEBI" id="CHEBI:15361"/>
    </ligand>
</feature>
<feature type="binding site" evidence="1">
    <location>
        <position position="203"/>
    </location>
    <ligand>
        <name>pyruvate</name>
        <dbReference type="ChEBI" id="CHEBI:15361"/>
    </ligand>
</feature>
<feature type="site" description="Part of a proton relay during catalysis" evidence="1">
    <location>
        <position position="44"/>
    </location>
</feature>
<feature type="site" description="Part of a proton relay during catalysis" evidence="1">
    <location>
        <position position="107"/>
    </location>
</feature>
<keyword id="KW-0028">Amino-acid biosynthesis</keyword>
<keyword id="KW-0963">Cytoplasm</keyword>
<keyword id="KW-0220">Diaminopimelate biosynthesis</keyword>
<keyword id="KW-0456">Lyase</keyword>
<keyword id="KW-0457">Lysine biosynthesis</keyword>
<keyword id="KW-0704">Schiff base</keyword>
<protein>
    <recommendedName>
        <fullName evidence="1">4-hydroxy-tetrahydrodipicolinate synthase</fullName>
        <shortName evidence="1">HTPA synthase</shortName>
        <ecNumber evidence="1">4.3.3.7</ecNumber>
    </recommendedName>
</protein>
<comment type="function">
    <text evidence="1">Catalyzes the condensation of (S)-aspartate-beta-semialdehyde [(S)-ASA] and pyruvate to 4-hydroxy-tetrahydrodipicolinate (HTPA).</text>
</comment>
<comment type="catalytic activity">
    <reaction evidence="1">
        <text>L-aspartate 4-semialdehyde + pyruvate = (2S,4S)-4-hydroxy-2,3,4,5-tetrahydrodipicolinate + H2O + H(+)</text>
        <dbReference type="Rhea" id="RHEA:34171"/>
        <dbReference type="ChEBI" id="CHEBI:15361"/>
        <dbReference type="ChEBI" id="CHEBI:15377"/>
        <dbReference type="ChEBI" id="CHEBI:15378"/>
        <dbReference type="ChEBI" id="CHEBI:67139"/>
        <dbReference type="ChEBI" id="CHEBI:537519"/>
        <dbReference type="EC" id="4.3.3.7"/>
    </reaction>
</comment>
<comment type="pathway">
    <text evidence="1">Amino-acid biosynthesis; L-lysine biosynthesis via DAP pathway; (S)-tetrahydrodipicolinate from L-aspartate: step 3/4.</text>
</comment>
<comment type="subunit">
    <text evidence="1">Homotetramer; dimer of dimers.</text>
</comment>
<comment type="subcellular location">
    <subcellularLocation>
        <location evidence="1">Cytoplasm</location>
    </subcellularLocation>
</comment>
<comment type="similarity">
    <text evidence="1">Belongs to the DapA family.</text>
</comment>
<comment type="caution">
    <text evidence="2">Was originally thought to be a dihydrodipicolinate synthase (DHDPS), catalyzing the condensation of (S)-aspartate-beta-semialdehyde [(S)-ASA] and pyruvate to dihydrodipicolinate (DHDP). However, it was shown in E.coli that the product of the enzymatic reaction is not dihydrodipicolinate but in fact (4S)-4-hydroxy-2,3,4,5-tetrahydro-(2S)-dipicolinic acid (HTPA), and that the consecutive dehydration reaction leading to DHDP is not spontaneous but catalyzed by DapB.</text>
</comment>
<dbReference type="EC" id="4.3.3.7" evidence="1"/>
<dbReference type="EMBL" id="AP009240">
    <property type="protein sequence ID" value="BAG78286.1"/>
    <property type="molecule type" value="Genomic_DNA"/>
</dbReference>
<dbReference type="RefSeq" id="WP_001295469.1">
    <property type="nucleotide sequence ID" value="NC_011415.1"/>
</dbReference>
<dbReference type="SMR" id="B6I548"/>
<dbReference type="GeneID" id="93774660"/>
<dbReference type="KEGG" id="ecy:ECSE_2762"/>
<dbReference type="HOGENOM" id="CLU_049343_7_1_6"/>
<dbReference type="UniPathway" id="UPA00034">
    <property type="reaction ID" value="UER00017"/>
</dbReference>
<dbReference type="Proteomes" id="UP000008199">
    <property type="component" value="Chromosome"/>
</dbReference>
<dbReference type="GO" id="GO:0005829">
    <property type="term" value="C:cytosol"/>
    <property type="evidence" value="ECO:0007669"/>
    <property type="project" value="TreeGrafter"/>
</dbReference>
<dbReference type="GO" id="GO:0008840">
    <property type="term" value="F:4-hydroxy-tetrahydrodipicolinate synthase activity"/>
    <property type="evidence" value="ECO:0007669"/>
    <property type="project" value="UniProtKB-UniRule"/>
</dbReference>
<dbReference type="GO" id="GO:0019877">
    <property type="term" value="P:diaminopimelate biosynthetic process"/>
    <property type="evidence" value="ECO:0007669"/>
    <property type="project" value="UniProtKB-UniRule"/>
</dbReference>
<dbReference type="GO" id="GO:0009089">
    <property type="term" value="P:lysine biosynthetic process via diaminopimelate"/>
    <property type="evidence" value="ECO:0007669"/>
    <property type="project" value="UniProtKB-UniRule"/>
</dbReference>
<dbReference type="CDD" id="cd00950">
    <property type="entry name" value="DHDPS"/>
    <property type="match status" value="1"/>
</dbReference>
<dbReference type="FunFam" id="3.20.20.70:FF:000046">
    <property type="entry name" value="4-hydroxy-tetrahydrodipicolinate synthase"/>
    <property type="match status" value="1"/>
</dbReference>
<dbReference type="Gene3D" id="3.20.20.70">
    <property type="entry name" value="Aldolase class I"/>
    <property type="match status" value="1"/>
</dbReference>
<dbReference type="HAMAP" id="MF_00418">
    <property type="entry name" value="DapA"/>
    <property type="match status" value="1"/>
</dbReference>
<dbReference type="InterPro" id="IPR013785">
    <property type="entry name" value="Aldolase_TIM"/>
</dbReference>
<dbReference type="InterPro" id="IPR005263">
    <property type="entry name" value="DapA"/>
</dbReference>
<dbReference type="InterPro" id="IPR002220">
    <property type="entry name" value="DapA-like"/>
</dbReference>
<dbReference type="InterPro" id="IPR020625">
    <property type="entry name" value="Schiff_base-form_aldolases_AS"/>
</dbReference>
<dbReference type="InterPro" id="IPR020624">
    <property type="entry name" value="Schiff_base-form_aldolases_CS"/>
</dbReference>
<dbReference type="NCBIfam" id="TIGR00674">
    <property type="entry name" value="dapA"/>
    <property type="match status" value="1"/>
</dbReference>
<dbReference type="PANTHER" id="PTHR12128:SF66">
    <property type="entry name" value="4-HYDROXY-2-OXOGLUTARATE ALDOLASE, MITOCHONDRIAL"/>
    <property type="match status" value="1"/>
</dbReference>
<dbReference type="PANTHER" id="PTHR12128">
    <property type="entry name" value="DIHYDRODIPICOLINATE SYNTHASE"/>
    <property type="match status" value="1"/>
</dbReference>
<dbReference type="Pfam" id="PF00701">
    <property type="entry name" value="DHDPS"/>
    <property type="match status" value="1"/>
</dbReference>
<dbReference type="PIRSF" id="PIRSF001365">
    <property type="entry name" value="DHDPS"/>
    <property type="match status" value="1"/>
</dbReference>
<dbReference type="PRINTS" id="PR00146">
    <property type="entry name" value="DHPICSNTHASE"/>
</dbReference>
<dbReference type="SMART" id="SM01130">
    <property type="entry name" value="DHDPS"/>
    <property type="match status" value="1"/>
</dbReference>
<dbReference type="SUPFAM" id="SSF51569">
    <property type="entry name" value="Aldolase"/>
    <property type="match status" value="1"/>
</dbReference>
<dbReference type="PROSITE" id="PS00665">
    <property type="entry name" value="DHDPS_1"/>
    <property type="match status" value="1"/>
</dbReference>
<dbReference type="PROSITE" id="PS00666">
    <property type="entry name" value="DHDPS_2"/>
    <property type="match status" value="1"/>
</dbReference>
<organism>
    <name type="scientific">Escherichia coli (strain SE11)</name>
    <dbReference type="NCBI Taxonomy" id="409438"/>
    <lineage>
        <taxon>Bacteria</taxon>
        <taxon>Pseudomonadati</taxon>
        <taxon>Pseudomonadota</taxon>
        <taxon>Gammaproteobacteria</taxon>
        <taxon>Enterobacterales</taxon>
        <taxon>Enterobacteriaceae</taxon>
        <taxon>Escherichia</taxon>
    </lineage>
</organism>
<accession>B6I548</accession>
<evidence type="ECO:0000255" key="1">
    <source>
        <dbReference type="HAMAP-Rule" id="MF_00418"/>
    </source>
</evidence>
<evidence type="ECO:0000305" key="2"/>
<sequence>MFTGSIVAIVTPMDEKGNVCRASLKKLIDYHVASGTSAIVSVGTTGESATLNHDEHADVVMMTLELADGRIPVIAGTGANATAEAISLTQRFNDSGIVGCLTVTPYYNRPSQEGLYQHFKAIAEHTDLPQILYNVPSRTGCDLLPETVGRLAKVKNIIGIKEATGNLTRVNQIKELVSDDFVLLSGDDASALDFMQLGGHGVISVTANVAARDMAQMCKLAAEGHFAEARVINQRLMPLHNKLFVEPNPIPVKWACKELGLVATDTLRLPMTPITDSGRETVRAALKHAGLL</sequence>
<reference key="1">
    <citation type="journal article" date="2008" name="DNA Res.">
        <title>Complete genome sequence and comparative analysis of the wild-type commensal Escherichia coli strain SE11 isolated from a healthy adult.</title>
        <authorList>
            <person name="Oshima K."/>
            <person name="Toh H."/>
            <person name="Ogura Y."/>
            <person name="Sasamoto H."/>
            <person name="Morita H."/>
            <person name="Park S.-H."/>
            <person name="Ooka T."/>
            <person name="Iyoda S."/>
            <person name="Taylor T.D."/>
            <person name="Hayashi T."/>
            <person name="Itoh K."/>
            <person name="Hattori M."/>
        </authorList>
    </citation>
    <scope>NUCLEOTIDE SEQUENCE [LARGE SCALE GENOMIC DNA]</scope>
    <source>
        <strain>SE11</strain>
    </source>
</reference>
<name>DAPA_ECOSE</name>
<gene>
    <name evidence="1" type="primary">dapA</name>
    <name type="ordered locus">ECSE_2762</name>
</gene>